<gene>
    <name type="primary">AHK2</name>
    <name type="ordered locus">At5g35750</name>
    <name type="ORF">MXH1.16</name>
</gene>
<proteinExistence type="evidence at protein level"/>
<dbReference type="EC" id="2.7.13.3"/>
<dbReference type="EMBL" id="AB046869">
    <property type="protein sequence ID" value="BAB40774.1"/>
    <property type="molecule type" value="mRNA"/>
</dbReference>
<dbReference type="EMBL" id="AB011485">
    <property type="protein sequence ID" value="BAB09274.1"/>
    <property type="status" value="ALT_SEQ"/>
    <property type="molecule type" value="Genomic_DNA"/>
</dbReference>
<dbReference type="EMBL" id="CP002688">
    <property type="protein sequence ID" value="AED94014.1"/>
    <property type="molecule type" value="Genomic_DNA"/>
</dbReference>
<dbReference type="EMBL" id="BT002530">
    <property type="protein sequence ID" value="AAO00890.1"/>
    <property type="status" value="ALT_INIT"/>
    <property type="molecule type" value="mRNA"/>
</dbReference>
<dbReference type="EMBL" id="BT008407">
    <property type="protein sequence ID" value="AAP37766.1"/>
    <property type="molecule type" value="mRNA"/>
</dbReference>
<dbReference type="EMBL" id="AK175733">
    <property type="protein sequence ID" value="BAD43496.1"/>
    <property type="status" value="ALT_INIT"/>
    <property type="molecule type" value="mRNA"/>
</dbReference>
<dbReference type="RefSeq" id="NP_568532.1">
    <property type="nucleotide sequence ID" value="NM_122966.3"/>
</dbReference>
<dbReference type="SMR" id="Q9C5U2"/>
<dbReference type="BioGRID" id="18805">
    <property type="interactions" value="44"/>
</dbReference>
<dbReference type="FunCoup" id="Q9C5U2">
    <property type="interactions" value="350"/>
</dbReference>
<dbReference type="IntAct" id="Q9C5U2">
    <property type="interactions" value="45"/>
</dbReference>
<dbReference type="STRING" id="3702.Q9C5U2"/>
<dbReference type="GlyGen" id="Q9C5U2">
    <property type="glycosylation" value="1 site"/>
</dbReference>
<dbReference type="iPTMnet" id="Q9C5U2"/>
<dbReference type="PaxDb" id="3702-AT5G35750.1"/>
<dbReference type="ProteomicsDB" id="245072"/>
<dbReference type="EnsemblPlants" id="AT5G35750.1">
    <property type="protein sequence ID" value="AT5G35750.1"/>
    <property type="gene ID" value="AT5G35750"/>
</dbReference>
<dbReference type="GeneID" id="833552"/>
<dbReference type="Gramene" id="AT5G35750.1">
    <property type="protein sequence ID" value="AT5G35750.1"/>
    <property type="gene ID" value="AT5G35750"/>
</dbReference>
<dbReference type="KEGG" id="ath:AT5G35750"/>
<dbReference type="Araport" id="AT5G35750"/>
<dbReference type="TAIR" id="AT5G35750">
    <property type="gene designation" value="HK2"/>
</dbReference>
<dbReference type="eggNOG" id="KOG0519">
    <property type="taxonomic scope" value="Eukaryota"/>
</dbReference>
<dbReference type="HOGENOM" id="CLU_000445_16_1_1"/>
<dbReference type="InParanoid" id="Q9C5U2"/>
<dbReference type="OMA" id="CNHGMIF"/>
<dbReference type="PhylomeDB" id="Q9C5U2"/>
<dbReference type="PRO" id="PR:Q9C5U2"/>
<dbReference type="Proteomes" id="UP000006548">
    <property type="component" value="Chromosome 5"/>
</dbReference>
<dbReference type="ExpressionAtlas" id="Q9C5U2">
    <property type="expression patterns" value="baseline and differential"/>
</dbReference>
<dbReference type="GO" id="GO:0005789">
    <property type="term" value="C:endoplasmic reticulum membrane"/>
    <property type="evidence" value="ECO:0007669"/>
    <property type="project" value="UniProtKB-SubCell"/>
</dbReference>
<dbReference type="GO" id="GO:0005886">
    <property type="term" value="C:plasma membrane"/>
    <property type="evidence" value="ECO:0000250"/>
    <property type="project" value="UniProtKB"/>
</dbReference>
<dbReference type="GO" id="GO:0009884">
    <property type="term" value="F:cytokinin receptor activity"/>
    <property type="evidence" value="ECO:0000304"/>
    <property type="project" value="TAIR"/>
</dbReference>
<dbReference type="GO" id="GO:0042802">
    <property type="term" value="F:identical protein binding"/>
    <property type="evidence" value="ECO:0000353"/>
    <property type="project" value="UniProtKB"/>
</dbReference>
<dbReference type="GO" id="GO:0019900">
    <property type="term" value="F:kinase binding"/>
    <property type="evidence" value="ECO:0000353"/>
    <property type="project" value="UniProtKB"/>
</dbReference>
<dbReference type="GO" id="GO:0000155">
    <property type="term" value="F:phosphorelay sensor kinase activity"/>
    <property type="evidence" value="ECO:0007669"/>
    <property type="project" value="InterPro"/>
</dbReference>
<dbReference type="GO" id="GO:0004673">
    <property type="term" value="F:protein histidine kinase activity"/>
    <property type="evidence" value="ECO:0000314"/>
    <property type="project" value="UniProtKB"/>
</dbReference>
<dbReference type="GO" id="GO:0043424">
    <property type="term" value="F:protein histidine kinase binding"/>
    <property type="evidence" value="ECO:0000353"/>
    <property type="project" value="UniProtKB"/>
</dbReference>
<dbReference type="GO" id="GO:0071215">
    <property type="term" value="P:cellular response to abscisic acid stimulus"/>
    <property type="evidence" value="ECO:0000315"/>
    <property type="project" value="UniProtKB"/>
</dbReference>
<dbReference type="GO" id="GO:0070417">
    <property type="term" value="P:cellular response to cold"/>
    <property type="evidence" value="ECO:0000315"/>
    <property type="project" value="UniProtKB"/>
</dbReference>
<dbReference type="GO" id="GO:0009736">
    <property type="term" value="P:cytokinin-activated signaling pathway"/>
    <property type="evidence" value="ECO:0000304"/>
    <property type="project" value="TAIR"/>
</dbReference>
<dbReference type="GO" id="GO:0034757">
    <property type="term" value="P:negative regulation of iron ion transport"/>
    <property type="evidence" value="ECO:0000315"/>
    <property type="project" value="UniProtKB"/>
</dbReference>
<dbReference type="GO" id="GO:0010087">
    <property type="term" value="P:phloem or xylem histogenesis"/>
    <property type="evidence" value="ECO:0000315"/>
    <property type="project" value="UniProtKB"/>
</dbReference>
<dbReference type="GO" id="GO:0010271">
    <property type="term" value="P:regulation of chlorophyll catabolic process"/>
    <property type="evidence" value="ECO:0000315"/>
    <property type="project" value="TAIR"/>
</dbReference>
<dbReference type="GO" id="GO:0009909">
    <property type="term" value="P:regulation of flower development"/>
    <property type="evidence" value="ECO:0000315"/>
    <property type="project" value="UniProtKB"/>
</dbReference>
<dbReference type="GO" id="GO:0048509">
    <property type="term" value="P:regulation of meristem development"/>
    <property type="evidence" value="ECO:0000315"/>
    <property type="project" value="UniProtKB"/>
</dbReference>
<dbReference type="GO" id="GO:0010029">
    <property type="term" value="P:regulation of seed germination"/>
    <property type="evidence" value="ECO:0000315"/>
    <property type="project" value="TAIR"/>
</dbReference>
<dbReference type="GO" id="GO:0048831">
    <property type="term" value="P:regulation of shoot system development"/>
    <property type="evidence" value="ECO:0000315"/>
    <property type="project" value="TAIR"/>
</dbReference>
<dbReference type="GO" id="GO:0009737">
    <property type="term" value="P:response to abscisic acid"/>
    <property type="evidence" value="ECO:0000270"/>
    <property type="project" value="TAIR"/>
</dbReference>
<dbReference type="GO" id="GO:0006970">
    <property type="term" value="P:response to osmotic stress"/>
    <property type="evidence" value="ECO:0000315"/>
    <property type="project" value="TAIR"/>
</dbReference>
<dbReference type="GO" id="GO:0009651">
    <property type="term" value="P:response to salt stress"/>
    <property type="evidence" value="ECO:0000270"/>
    <property type="project" value="TAIR"/>
</dbReference>
<dbReference type="GO" id="GO:0009636">
    <property type="term" value="P:response to toxic substance"/>
    <property type="evidence" value="ECO:0000315"/>
    <property type="project" value="UniProtKB"/>
</dbReference>
<dbReference type="GO" id="GO:0009414">
    <property type="term" value="P:response to water deprivation"/>
    <property type="evidence" value="ECO:0000270"/>
    <property type="project" value="TAIR"/>
</dbReference>
<dbReference type="GO" id="GO:0080117">
    <property type="term" value="P:secondary growth"/>
    <property type="evidence" value="ECO:0000315"/>
    <property type="project" value="UniProtKB"/>
</dbReference>
<dbReference type="CDD" id="cd16922">
    <property type="entry name" value="HATPase_EvgS-ArcB-TorS-like"/>
    <property type="match status" value="1"/>
</dbReference>
<dbReference type="CDD" id="cd00082">
    <property type="entry name" value="HisKA"/>
    <property type="match status" value="1"/>
</dbReference>
<dbReference type="CDD" id="cd17546">
    <property type="entry name" value="REC_hyHK_CKI1_RcsC-like"/>
    <property type="match status" value="1"/>
</dbReference>
<dbReference type="FunFam" id="3.40.50.2300:FF:000137">
    <property type="entry name" value="Histidine kinase 3"/>
    <property type="match status" value="1"/>
</dbReference>
<dbReference type="FunFam" id="1.10.287.130:FF:000015">
    <property type="entry name" value="Histidine kinase 4"/>
    <property type="match status" value="1"/>
</dbReference>
<dbReference type="FunFam" id="3.30.450.350:FF:000001">
    <property type="entry name" value="Histidine kinase 4"/>
    <property type="match status" value="1"/>
</dbReference>
<dbReference type="Gene3D" id="1.10.287.130">
    <property type="match status" value="1"/>
</dbReference>
<dbReference type="Gene3D" id="3.40.50.2300">
    <property type="match status" value="2"/>
</dbReference>
<dbReference type="Gene3D" id="6.10.250.1190">
    <property type="match status" value="1"/>
</dbReference>
<dbReference type="Gene3D" id="3.30.450.350">
    <property type="entry name" value="CHASE domain"/>
    <property type="match status" value="1"/>
</dbReference>
<dbReference type="Gene3D" id="3.30.565.10">
    <property type="entry name" value="Histidine kinase-like ATPase, C-terminal domain"/>
    <property type="match status" value="1"/>
</dbReference>
<dbReference type="InterPro" id="IPR050956">
    <property type="entry name" value="2C_system_His_kinase"/>
</dbReference>
<dbReference type="InterPro" id="IPR006189">
    <property type="entry name" value="CHASE_dom"/>
</dbReference>
<dbReference type="InterPro" id="IPR042240">
    <property type="entry name" value="CHASE_sf"/>
</dbReference>
<dbReference type="InterPro" id="IPR011006">
    <property type="entry name" value="CheY-like_superfamily"/>
</dbReference>
<dbReference type="InterPro" id="IPR036890">
    <property type="entry name" value="HATPase_C_sf"/>
</dbReference>
<dbReference type="InterPro" id="IPR005467">
    <property type="entry name" value="His_kinase_dom"/>
</dbReference>
<dbReference type="InterPro" id="IPR003661">
    <property type="entry name" value="HisK_dim/P_dom"/>
</dbReference>
<dbReference type="InterPro" id="IPR036097">
    <property type="entry name" value="HisK_dim/P_sf"/>
</dbReference>
<dbReference type="InterPro" id="IPR056839">
    <property type="entry name" value="Receiver_AHK4/CRE1_1st"/>
</dbReference>
<dbReference type="InterPro" id="IPR004358">
    <property type="entry name" value="Sig_transdc_His_kin-like_C"/>
</dbReference>
<dbReference type="InterPro" id="IPR001789">
    <property type="entry name" value="Sig_transdc_resp-reg_receiver"/>
</dbReference>
<dbReference type="PANTHER" id="PTHR43719:SF35">
    <property type="entry name" value="HISTIDINE KINASE 2"/>
    <property type="match status" value="1"/>
</dbReference>
<dbReference type="PANTHER" id="PTHR43719">
    <property type="entry name" value="TWO-COMPONENT HISTIDINE KINASE"/>
    <property type="match status" value="1"/>
</dbReference>
<dbReference type="Pfam" id="PF03924">
    <property type="entry name" value="CHASE"/>
    <property type="match status" value="1"/>
</dbReference>
<dbReference type="Pfam" id="PF02518">
    <property type="entry name" value="HATPase_c"/>
    <property type="match status" value="1"/>
</dbReference>
<dbReference type="Pfam" id="PF00512">
    <property type="entry name" value="HisKA"/>
    <property type="match status" value="1"/>
</dbReference>
<dbReference type="Pfam" id="PF24896">
    <property type="entry name" value="Receiver_CRE1"/>
    <property type="match status" value="1"/>
</dbReference>
<dbReference type="Pfam" id="PF00072">
    <property type="entry name" value="Response_reg"/>
    <property type="match status" value="1"/>
</dbReference>
<dbReference type="PRINTS" id="PR00344">
    <property type="entry name" value="BCTRLSENSOR"/>
</dbReference>
<dbReference type="SMART" id="SM01079">
    <property type="entry name" value="CHASE"/>
    <property type="match status" value="1"/>
</dbReference>
<dbReference type="SMART" id="SM00387">
    <property type="entry name" value="HATPase_c"/>
    <property type="match status" value="1"/>
</dbReference>
<dbReference type="SMART" id="SM00388">
    <property type="entry name" value="HisKA"/>
    <property type="match status" value="1"/>
</dbReference>
<dbReference type="SMART" id="SM00448">
    <property type="entry name" value="REC"/>
    <property type="match status" value="1"/>
</dbReference>
<dbReference type="SUPFAM" id="SSF55874">
    <property type="entry name" value="ATPase domain of HSP90 chaperone/DNA topoisomerase II/histidine kinase"/>
    <property type="match status" value="1"/>
</dbReference>
<dbReference type="SUPFAM" id="SSF52172">
    <property type="entry name" value="CheY-like"/>
    <property type="match status" value="2"/>
</dbReference>
<dbReference type="SUPFAM" id="SSF47384">
    <property type="entry name" value="Homodimeric domain of signal transducing histidine kinase"/>
    <property type="match status" value="1"/>
</dbReference>
<dbReference type="PROSITE" id="PS50839">
    <property type="entry name" value="CHASE"/>
    <property type="match status" value="1"/>
</dbReference>
<dbReference type="PROSITE" id="PS50109">
    <property type="entry name" value="HIS_KIN"/>
    <property type="match status" value="1"/>
</dbReference>
<dbReference type="PROSITE" id="PS50110">
    <property type="entry name" value="RESPONSE_REGULATORY"/>
    <property type="match status" value="2"/>
</dbReference>
<feature type="chain" id="PRO_0000398587" description="Histidine kinase 2">
    <location>
        <begin position="1"/>
        <end position="1176"/>
    </location>
</feature>
<feature type="topological domain" description="Cytoplasmic" evidence="2">
    <location>
        <begin position="1"/>
        <end position="29"/>
    </location>
</feature>
<feature type="transmembrane region" description="Helical" evidence="2">
    <location>
        <begin position="30"/>
        <end position="50"/>
    </location>
</feature>
<feature type="topological domain" description="Extracellular" evidence="2">
    <location>
        <begin position="51"/>
        <end position="174"/>
    </location>
</feature>
<feature type="transmembrane region" description="Helical" evidence="2">
    <location>
        <begin position="175"/>
        <end position="195"/>
    </location>
</feature>
<feature type="topological domain" description="Cytoplasmic" evidence="2">
    <location>
        <begin position="196"/>
        <end position="232"/>
    </location>
</feature>
<feature type="transmembrane region" description="Helical" evidence="2">
    <location>
        <begin position="233"/>
        <end position="253"/>
    </location>
</feature>
<feature type="topological domain" description="Extracellular" evidence="2">
    <location>
        <begin position="254"/>
        <end position="536"/>
    </location>
</feature>
<feature type="transmembrane region" description="Helical" evidence="2">
    <location>
        <begin position="537"/>
        <end position="557"/>
    </location>
</feature>
<feature type="topological domain" description="Cytoplasmic" evidence="2">
    <location>
        <begin position="558"/>
        <end position="1176"/>
    </location>
</feature>
<feature type="domain" description="CHASE" evidence="3">
    <location>
        <begin position="302"/>
        <end position="526"/>
    </location>
</feature>
<feature type="domain" description="Histidine kinase" evidence="4">
    <location>
        <begin position="594"/>
        <end position="867"/>
    </location>
</feature>
<feature type="domain" description="Response regulatory 1" evidence="5">
    <location>
        <begin position="891"/>
        <end position="1013"/>
    </location>
</feature>
<feature type="domain" description="Response regulatory 2" evidence="5">
    <location>
        <begin position="1036"/>
        <end position="1173"/>
    </location>
</feature>
<feature type="modified residue" description="Phosphohistidine; by autocatalysis" evidence="4">
    <location>
        <position position="597"/>
    </location>
</feature>
<feature type="modified residue" description="4-aspartylphosphate" evidence="5">
    <location>
        <position position="942"/>
    </location>
</feature>
<feature type="modified residue" description="4-aspartylphosphate" evidence="5">
    <location>
        <position position="1086"/>
    </location>
</feature>
<feature type="mutagenesis site" description="Loss of cytokinin-mediated activation." evidence="12">
    <original>T</original>
    <variation>I</variation>
    <location>
        <position position="418"/>
    </location>
</feature>
<feature type="mutagenesis site" description="Constitutively activated independently of cytokinin." evidence="12">
    <original>I</original>
    <variation>A</variation>
    <location>
        <position position="586"/>
    </location>
</feature>
<feature type="sequence conflict" description="In Ref. 5; BAD43496." evidence="22" ref="5">
    <original>E</original>
    <variation>K</variation>
    <location>
        <position position="1103"/>
    </location>
</feature>
<keyword id="KW-0932">Cytokinin signaling pathway</keyword>
<keyword id="KW-0217">Developmental protein</keyword>
<keyword id="KW-0256">Endoplasmic reticulum</keyword>
<keyword id="KW-0418">Kinase</keyword>
<keyword id="KW-0472">Membrane</keyword>
<keyword id="KW-0597">Phosphoprotein</keyword>
<keyword id="KW-1185">Reference proteome</keyword>
<keyword id="KW-0808">Transferase</keyword>
<keyword id="KW-0812">Transmembrane</keyword>
<keyword id="KW-1133">Transmembrane helix</keyword>
<comment type="function">
    <text evidence="7 8 9 10 12 13 14 16 17 18 19 20">Cytokinins (CK) receptor related to bacterial two-component regulators. Functions as a histidine kinase and transmits the stress signal to a downstream MAPK cascade. This protein undergoes an ATP-dependent autophosphorylation at a conserved histidine residue in the kinase core, and a phosphoryl group is then transferred to a conserved aspartate residue in the receiver domain. In the presence of cytokinin, feeds phosphate to phosphorelay-integrating histidine phosphotransfer protein (HPt) and activates subsequent cascade. Involved in meristems establishment in seedlings. Redundant negative regulator of drought and salt stress responses and abscisic acid (ABA) signaling. Together with AHK3, plays a negative regulatory role in cold stress signaling via inhibition of ABA response, occurring independently of the cold acclimation pathway. Redundant positive regulator of cytokinin signaling that regulates many developmental processes including seed germination, cell division, seed size, chlorophyll retention during leaf senescence, root repression and shoot promotion. Involved in alkamides (e.g. N-isobutyl decanamide) and N-acylethanolamides (NAE) signaling that control meristematic activity and differentiation processes during plant development. Contributes to vascular bundle formation and secondary growth in a cytokinin-dependent manner, probably by promoting the maintenance of mitotic activity and/or identity of procambial cells. Together with AHK4, required for growth and reproduction promotion stimulated by the endophytic fungus Piriformospora indica in a trans-zeatin-dependent manner. Required by the cytokinin-dependent flower development regulation pathway.</text>
</comment>
<comment type="catalytic activity">
    <reaction>
        <text>ATP + protein L-histidine = ADP + protein N-phospho-L-histidine.</text>
        <dbReference type="EC" id="2.7.13.3"/>
    </reaction>
</comment>
<comment type="activity regulation">
    <text evidence="1">Activated by cytokinins to initiate phosphorelay signaling.</text>
</comment>
<comment type="subunit">
    <text evidence="11 15">Self-interacts. Interacts with AHK3, AHP1, AHP2, AHP3, AHP5, ATAF2, AT2S3, BETAA-AD, CYP20-2, DRP1A, HIR1, HIR2, PI4KB1, PI4KG5 and At4g12060.</text>
</comment>
<comment type="interaction">
    <interactant intactId="EBI-1100634">
        <id>Q9C5U2</id>
    </interactant>
    <interactant intactId="EBI-1100634">
        <id>Q9C5U2</id>
        <label>AHK2</label>
    </interactant>
    <organismsDiffer>false</organismsDiffer>
    <experiments>2</experiments>
</comment>
<comment type="interaction">
    <interactant intactId="EBI-1100634">
        <id>Q9C5U2</id>
    </interactant>
    <interactant intactId="EBI-1100653">
        <id>Q9C5U1</id>
        <label>AHK3</label>
    </interactant>
    <organismsDiffer>false</organismsDiffer>
    <experiments>2</experiments>
</comment>
<comment type="interaction">
    <interactant intactId="EBI-1100634">
        <id>Q9C5U2</id>
    </interactant>
    <interactant intactId="EBI-1100673">
        <id>Q9ZNV9</id>
        <label>AHP1</label>
    </interactant>
    <organismsDiffer>false</organismsDiffer>
    <experiments>2</experiments>
</comment>
<comment type="interaction">
    <interactant intactId="EBI-1100634">
        <id>Q9C5U2</id>
    </interactant>
    <interactant intactId="EBI-1100687">
        <id>Q9ZNV8</id>
        <label>AHP2</label>
    </interactant>
    <organismsDiffer>false</organismsDiffer>
    <experiments>3</experiments>
</comment>
<comment type="interaction">
    <interactant intactId="EBI-1100634">
        <id>Q9C5U2</id>
    </interactant>
    <interactant intactId="EBI-1100711">
        <id>Q9SAZ5</id>
        <label>AHP3</label>
    </interactant>
    <organismsDiffer>false</organismsDiffer>
    <experiments>3</experiments>
</comment>
<comment type="interaction">
    <interactant intactId="EBI-1100634">
        <id>Q9C5U2</id>
    </interactant>
    <interactant intactId="EBI-1100737">
        <id>Q8L9Y3</id>
        <label>ARR14</label>
    </interactant>
    <organismsDiffer>false</organismsDiffer>
    <experiments>3</experiments>
</comment>
<comment type="interaction">
    <interactant intactId="EBI-1100634">
        <id>Q9C5U2</id>
    </interactant>
    <interactant intactId="EBI-1100725">
        <id>Q67XQ1</id>
        <label>At1g03430</label>
    </interactant>
    <organismsDiffer>false</organismsDiffer>
    <experiments>3</experiments>
</comment>
<comment type="interaction">
    <interactant intactId="EBI-1100634">
        <id>Q9C5U2</id>
    </interactant>
    <interactant intactId="EBI-1807552">
        <id>P15459</id>
        <label>AT2S3</label>
    </interactant>
    <organismsDiffer>false</organismsDiffer>
    <experiments>2</experiments>
</comment>
<comment type="interaction">
    <interactant intactId="EBI-1100634">
        <id>Q9C5U2</id>
    </interactant>
    <interactant intactId="EBI-994234">
        <id>P42697</id>
        <label>DRP1A</label>
    </interactant>
    <organismsDiffer>false</organismsDiffer>
    <experiments>3</experiments>
</comment>
<comment type="interaction">
    <interactant intactId="EBI-1100634">
        <id>Q9C5U2</id>
    </interactant>
    <interactant intactId="EBI-1807466">
        <id>Q9FM19</id>
        <label>HIR1</label>
    </interactant>
    <organismsDiffer>false</organismsDiffer>
    <experiments>2</experiments>
</comment>
<comment type="interaction">
    <interactant intactId="EBI-1100634">
        <id>Q9C5U2</id>
    </interactant>
    <interactant intactId="EBI-1807580">
        <id>Q9CAR7</id>
        <label>HIR2</label>
    </interactant>
    <organismsDiffer>false</organismsDiffer>
    <experiments>2</experiments>
</comment>
<comment type="interaction">
    <interactant intactId="EBI-1100634">
        <id>Q9C5U2</id>
    </interactant>
    <interactant intactId="EBI-1807432">
        <id>Q9FMJ0</id>
        <label>PI4KB1</label>
    </interactant>
    <organismsDiffer>false</organismsDiffer>
    <experiments>2</experiments>
</comment>
<comment type="interaction">
    <interactant intactId="EBI-1100634">
        <id>Q9C5U2</id>
    </interactant>
    <interactant intactId="EBI-1807485">
        <id>Q9ASS6</id>
        <label>PNSL5</label>
    </interactant>
    <organismsDiffer>false</organismsDiffer>
    <experiments>2</experiments>
</comment>
<comment type="subcellular location">
    <subcellularLocation>
        <location evidence="21">Endoplasmic reticulum membrane</location>
        <topology evidence="21">Multi-pass membrane protein</topology>
    </subcellularLocation>
</comment>
<comment type="tissue specificity">
    <text evidence="6 7 8">Expressed in roots, leaves and flowers, mostly in the vascular tissues. Present in seedlings.</text>
</comment>
<comment type="developmental stage">
    <text evidence="7 10">In seedlings, mainly localized in meristematic tissues (e.g. shoot apical meristem SAM, root tips, and growing leaf and lateral root primordia). Present in all the vasculature and the shoot apical meristem (SAM) of the adult plant. In flowers, localized in carpels and developing ovules. In the root tips, expressed in and near the vascular initial cells.</text>
</comment>
<comment type="induction">
    <text evidence="14">Rapidly induced by dehydration, slightly induced by high salinity and abscisic acid (ABA).</text>
</comment>
<comment type="PTM">
    <text evidence="1">Autophosphorylated predominantly on His residues. Activation probably requires a transfer of a phosphate group between a His in the transmitter domain and an Asp of the receiver domain (By similarity).</text>
</comment>
<comment type="disruption phenotype">
    <text evidence="7 8 9 10 13 14 17 18 19 20">Hypersensitivity to ABA, and strong drought and salinity tolerance. Slightly reduced sensitivity to cytokinin. More rapid germination, reduced requirement for light, and decreased far-red light sensitivity. Reduced sensitivity to N-isobutyl decanamide. Defects in procambium proliferation and absence of secondary growth. Enhanced freezing tolerance. Impaired meristematic development in seedlings. Disturbed cytokinin-mediated flower development abnormality.</text>
</comment>
<comment type="sequence caution" evidence="22">
    <conflict type="erroneous initiation">
        <sequence resource="EMBL-CDS" id="AAO00890"/>
    </conflict>
    <text>Truncated N-terminus.</text>
</comment>
<comment type="sequence caution" evidence="22">
    <conflict type="erroneous gene model prediction">
        <sequence resource="EMBL-CDS" id="BAB09274"/>
    </conflict>
</comment>
<comment type="sequence caution" evidence="22">
    <conflict type="erroneous initiation">
        <sequence resource="EMBL-CDS" id="BAD43496"/>
    </conflict>
    <text>Truncated N-terminus.</text>
</comment>
<protein>
    <recommendedName>
        <fullName>Histidine kinase 2</fullName>
        <ecNumber>2.7.13.3</ecNumber>
    </recommendedName>
    <alternativeName>
        <fullName>Arabidopsis histidine kinase 2</fullName>
        <shortName>AtHK2</shortName>
    </alternativeName>
    <alternativeName>
        <fullName>Protein AUTHENTIC HIS-KINASE 2</fullName>
    </alternativeName>
</protein>
<accession>Q9C5U2</accession>
<accession>Q680Y4</accession>
<accession>Q8GUG0</accession>
<accession>Q9FKH3</accession>
<organism>
    <name type="scientific">Arabidopsis thaliana</name>
    <name type="common">Mouse-ear cress</name>
    <dbReference type="NCBI Taxonomy" id="3702"/>
    <lineage>
        <taxon>Eukaryota</taxon>
        <taxon>Viridiplantae</taxon>
        <taxon>Streptophyta</taxon>
        <taxon>Embryophyta</taxon>
        <taxon>Tracheophyta</taxon>
        <taxon>Spermatophyta</taxon>
        <taxon>Magnoliopsida</taxon>
        <taxon>eudicotyledons</taxon>
        <taxon>Gunneridae</taxon>
        <taxon>Pentapetalae</taxon>
        <taxon>rosids</taxon>
        <taxon>malvids</taxon>
        <taxon>Brassicales</taxon>
        <taxon>Brassicaceae</taxon>
        <taxon>Camelineae</taxon>
        <taxon>Arabidopsis</taxon>
    </lineage>
</organism>
<name>AHK2_ARATH</name>
<reference key="1">
    <citation type="journal article" date="2001" name="Plant Cell Physiol.">
        <title>Novel family of sensor histidine kinase genes in Arabidopsis thaliana.</title>
        <authorList>
            <person name="Ueguchi C."/>
            <person name="Koizumi H."/>
            <person name="Suzuki T."/>
            <person name="Mizuno T."/>
        </authorList>
    </citation>
    <scope>NUCLEOTIDE SEQUENCE [MRNA]</scope>
    <scope>TISSUE SPECIFICITY</scope>
</reference>
<reference key="2">
    <citation type="journal article" date="1998" name="DNA Res.">
        <title>Structural analysis of Arabidopsis thaliana chromosome 5. V. Sequence features of the regions of 1,381,565 bp covered by twenty one physically assigned P1 and TAC clones.</title>
        <authorList>
            <person name="Kaneko T."/>
            <person name="Kotani H."/>
            <person name="Nakamura Y."/>
            <person name="Sato S."/>
            <person name="Asamizu E."/>
            <person name="Miyajima N."/>
            <person name="Tabata S."/>
        </authorList>
    </citation>
    <scope>NUCLEOTIDE SEQUENCE [LARGE SCALE GENOMIC DNA]</scope>
    <source>
        <strain>cv. Columbia</strain>
    </source>
</reference>
<reference key="3">
    <citation type="journal article" date="2017" name="Plant J.">
        <title>Araport11: a complete reannotation of the Arabidopsis thaliana reference genome.</title>
        <authorList>
            <person name="Cheng C.Y."/>
            <person name="Krishnakumar V."/>
            <person name="Chan A.P."/>
            <person name="Thibaud-Nissen F."/>
            <person name="Schobel S."/>
            <person name="Town C.D."/>
        </authorList>
    </citation>
    <scope>GENOME REANNOTATION</scope>
    <source>
        <strain>cv. Columbia</strain>
    </source>
</reference>
<reference key="4">
    <citation type="journal article" date="2003" name="Science">
        <title>Empirical analysis of transcriptional activity in the Arabidopsis genome.</title>
        <authorList>
            <person name="Yamada K."/>
            <person name="Lim J."/>
            <person name="Dale J.M."/>
            <person name="Chen H."/>
            <person name="Shinn P."/>
            <person name="Palm C.J."/>
            <person name="Southwick A.M."/>
            <person name="Wu H.C."/>
            <person name="Kim C.J."/>
            <person name="Nguyen M."/>
            <person name="Pham P.K."/>
            <person name="Cheuk R.F."/>
            <person name="Karlin-Newmann G."/>
            <person name="Liu S.X."/>
            <person name="Lam B."/>
            <person name="Sakano H."/>
            <person name="Wu T."/>
            <person name="Yu G."/>
            <person name="Miranda M."/>
            <person name="Quach H.L."/>
            <person name="Tripp M."/>
            <person name="Chang C.H."/>
            <person name="Lee J.M."/>
            <person name="Toriumi M.J."/>
            <person name="Chan M.M."/>
            <person name="Tang C.C."/>
            <person name="Onodera C.S."/>
            <person name="Deng J.M."/>
            <person name="Akiyama K."/>
            <person name="Ansari Y."/>
            <person name="Arakawa T."/>
            <person name="Banh J."/>
            <person name="Banno F."/>
            <person name="Bowser L."/>
            <person name="Brooks S.Y."/>
            <person name="Carninci P."/>
            <person name="Chao Q."/>
            <person name="Choy N."/>
            <person name="Enju A."/>
            <person name="Goldsmith A.D."/>
            <person name="Gurjal M."/>
            <person name="Hansen N.F."/>
            <person name="Hayashizaki Y."/>
            <person name="Johnson-Hopson C."/>
            <person name="Hsuan V.W."/>
            <person name="Iida K."/>
            <person name="Karnes M."/>
            <person name="Khan S."/>
            <person name="Koesema E."/>
            <person name="Ishida J."/>
            <person name="Jiang P.X."/>
            <person name="Jones T."/>
            <person name="Kawai J."/>
            <person name="Kamiya A."/>
            <person name="Meyers C."/>
            <person name="Nakajima M."/>
            <person name="Narusaka M."/>
            <person name="Seki M."/>
            <person name="Sakurai T."/>
            <person name="Satou M."/>
            <person name="Tamse R."/>
            <person name="Vaysberg M."/>
            <person name="Wallender E.K."/>
            <person name="Wong C."/>
            <person name="Yamamura Y."/>
            <person name="Yuan S."/>
            <person name="Shinozaki K."/>
            <person name="Davis R.W."/>
            <person name="Theologis A."/>
            <person name="Ecker J.R."/>
        </authorList>
    </citation>
    <scope>NUCLEOTIDE SEQUENCE [LARGE SCALE MRNA] OF 519-1176</scope>
    <source>
        <strain>cv. Columbia</strain>
    </source>
</reference>
<reference key="5">
    <citation type="submission" date="2004-09" db="EMBL/GenBank/DDBJ databases">
        <title>Large-scale analysis of RIKEN Arabidopsis full-length (RAFL) cDNAs.</title>
        <authorList>
            <person name="Totoki Y."/>
            <person name="Seki M."/>
            <person name="Ishida J."/>
            <person name="Nakajima M."/>
            <person name="Enju A."/>
            <person name="Kamiya A."/>
            <person name="Narusaka M."/>
            <person name="Shin-i T."/>
            <person name="Nakagawa M."/>
            <person name="Sakamoto N."/>
            <person name="Oishi K."/>
            <person name="Kohara Y."/>
            <person name="Kobayashi M."/>
            <person name="Toyoda A."/>
            <person name="Sakaki Y."/>
            <person name="Sakurai T."/>
            <person name="Iida K."/>
            <person name="Akiyama K."/>
            <person name="Satou M."/>
            <person name="Toyoda T."/>
            <person name="Konagaya A."/>
            <person name="Carninci P."/>
            <person name="Kawai J."/>
            <person name="Hayashizaki Y."/>
            <person name="Shinozaki K."/>
        </authorList>
    </citation>
    <scope>NUCLEOTIDE SEQUENCE [LARGE SCALE MRNA] OF 1095-1176</scope>
    <source>
        <strain>cv. Columbia</strain>
    </source>
</reference>
<reference key="6">
    <citation type="journal article" date="2002" name="Genes Genet. Syst.">
        <title>His-Asp phosphorelay signal transduction in higher plants: receptors and response regulators for cytokinin signaling in Arabidopsis thaliana.</title>
        <authorList>
            <person name="Oka A."/>
            <person name="Sakai H."/>
            <person name="Iwakoshi S."/>
        </authorList>
    </citation>
    <scope>REVIEW</scope>
</reference>
<reference key="7">
    <citation type="journal article" date="2002" name="Plant Physiol.">
        <title>Two-component signal transduction pathways in Arabidopsis.</title>
        <authorList>
            <person name="Hwang I."/>
            <person name="Chen H.-C."/>
            <person name="Sheen J."/>
        </authorList>
    </citation>
    <scope>GENE FAMILY</scope>
    <scope>NOMENCLATURE</scope>
</reference>
<reference key="8">
    <citation type="journal article" date="2004" name="Plant Cell">
        <title>Histidine kinase homologs that act as cytokinin receptors possess overlapping functions in the regulation of shoot and root growth in Arabidopsis.</title>
        <authorList>
            <person name="Nishimura C."/>
            <person name="Ohashi Y."/>
            <person name="Sato S."/>
            <person name="Kato T."/>
            <person name="Tabata S."/>
            <person name="Ueguchi C."/>
        </authorList>
    </citation>
    <scope>FUNCTION</scope>
    <scope>DISRUPTION PHENOTYPE</scope>
    <scope>TISSUE SPECIFICITY</scope>
    <scope>DEVELOPMENTAL STAGE</scope>
</reference>
<reference key="9">
    <citation type="journal article" date="2004" name="Proc. Natl. Acad. Sci. U.S.A.">
        <title>In planta functions of the Arabidopsis cytokinin receptor family.</title>
        <authorList>
            <person name="Higuchi M."/>
            <person name="Pischke M.S."/>
            <person name="Maehoenen A.P."/>
            <person name="Miyawaki K."/>
            <person name="Hashimoto Y."/>
            <person name="Seki M."/>
            <person name="Kobayashi M."/>
            <person name="Shinozaki K."/>
            <person name="Kato T."/>
            <person name="Tabata S."/>
            <person name="Helariutta Y."/>
            <person name="Sussman M.R."/>
            <person name="Kakimoto T."/>
        </authorList>
    </citation>
    <scope>FUNCTION</scope>
    <scope>TISSUE SPECIFICITY</scope>
    <scope>DISRUPTION PHENOTYPE</scope>
</reference>
<reference key="10">
    <citation type="journal article" date="2006" name="Curr. Biol.">
        <title>Cytokinins regulate a bidirectional phosphorelay network in Arabidopsis.</title>
        <authorList>
            <person name="Maehoenen A.P."/>
            <person name="Higuchi M."/>
            <person name="Toermaekangas K."/>
            <person name="Miyawaki K."/>
            <person name="Pischke M.S."/>
            <person name="Sussman M.R."/>
            <person name="Helariutta Y."/>
            <person name="Kakimoto T."/>
        </authorList>
    </citation>
    <scope>FUNCTION</scope>
    <scope>DISRUPTION PHENOTYPE</scope>
    <scope>DEVELOPMENTAL STAGE</scope>
</reference>
<reference key="11">
    <citation type="journal article" date="2006" name="FEBS J.">
        <title>Analysis of protein interactions within the cytokinin-signaling pathway of Arabidopsis thaliana.</title>
        <authorList>
            <person name="Dortay H."/>
            <person name="Mehnert N."/>
            <person name="Buerkle L."/>
            <person name="Schmuelling T."/>
            <person name="Heyl A."/>
        </authorList>
    </citation>
    <scope>HOMODIMERIZATION</scope>
    <scope>INTERACTION WITH AHK3; AHP1; AHP2; AHP3 AND AHP5</scope>
</reference>
<reference key="12">
    <citation type="journal article" date="2006" name="Plant Cell">
        <title>Arabidopsis cytokinin receptor mutants reveal functions in shoot growth, leaf senescence, seed size, germination, root development, and cytokinin metabolism.</title>
        <authorList>
            <person name="Riefler M."/>
            <person name="Novak O."/>
            <person name="Strnad M."/>
            <person name="Schmuelling T."/>
        </authorList>
    </citation>
    <scope>FUNCTION</scope>
    <scope>DISRUPTION PHENOTYPE</scope>
</reference>
<reference key="13">
    <citation type="journal article" date="2007" name="Plant Cell Physiol.">
        <title>Identification of amino acid substitutions that render the Arabidopsis cytokinin receptor histidine kinase AHK4 constitutively active.</title>
        <authorList>
            <person name="Miwa K."/>
            <person name="Ishikawa K."/>
            <person name="Terada K."/>
            <person name="Yamada H."/>
            <person name="Suzuki T."/>
            <person name="Yamashino T."/>
            <person name="Mizuno T."/>
        </authorList>
    </citation>
    <scope>FUNCTION</scope>
    <scope>MUTAGENESIS OF THR-418 AND ILE-586</scope>
</reference>
<reference key="14">
    <citation type="journal article" date="2007" name="Proc. Natl. Acad. Sci. U.S.A.">
        <title>Functional analysis of AHK1/ATHK1 and cytokinin receptor histidine kinases in response to abscisic acid, drought, and salt stress in Arabidopsis.</title>
        <authorList>
            <person name="Tran L.S."/>
            <person name="Urao T."/>
            <person name="Qin F."/>
            <person name="Maruyama K."/>
            <person name="Kakimoto T."/>
            <person name="Shinozaki K."/>
            <person name="Yamaguchi-Shinozaki K."/>
        </authorList>
    </citation>
    <scope>FUNCTION</scope>
    <scope>INDUCTION</scope>
    <scope>DISRUPTION PHENOTYPE</scope>
</reference>
<reference key="15">
    <citation type="journal article" date="2007" name="Plant Physiol.">
        <title>Cytokinin receptors are involved in alkamide regulation of root and shoot development in Arabidopsis.</title>
        <authorList>
            <person name="Lopez-Bucio J."/>
            <person name="Millan-Godinez M."/>
            <person name="Mendez-Bravo A."/>
            <person name="Morquecho-Contreras A."/>
            <person name="Ramirez-Chavez E."/>
            <person name="Molina-Torres J."/>
            <person name="Perez-Torres A."/>
            <person name="Higuchi M."/>
            <person name="Kakimoto T."/>
            <person name="Herrera-Estrella L."/>
        </authorList>
    </citation>
    <scope>FUNCTION</scope>
    <scope>DISRUPTION PHENOTYPE</scope>
</reference>
<reference key="16">
    <citation type="journal article" date="2008" name="J. Proteome Res.">
        <title>Toward an interaction map of the two-component signaling pathway of Arabidopsis thaliana.</title>
        <authorList>
            <person name="Dortay H."/>
            <person name="Gruhn N."/>
            <person name="Pfeifer A."/>
            <person name="Schwerdtner M."/>
            <person name="Schmuelling T."/>
            <person name="Heyl A."/>
        </authorList>
    </citation>
    <scope>INTERACTION WITH AT2S3; ATAF2; BETAA-AD; CYP20-2; DRP1A; HIR1; HIR2; PI4KB1; PI4KG5; AT4G12060; AHP3 AND AHP2</scope>
</reference>
<reference key="17">
    <citation type="journal article" date="2008" name="Mol. Plant Microbe Interact.">
        <title>The role of auxins and cytokinins in the mutualistic interaction between Arabidopsis and Piriformospora indica.</title>
        <authorList>
            <person name="Vadassery J."/>
            <person name="Ritter C."/>
            <person name="Venus Y."/>
            <person name="Camehl I."/>
            <person name="Varma A."/>
            <person name="Shahollari B."/>
            <person name="Novak O."/>
            <person name="Strnad M."/>
            <person name="Ludwig-Mueller J."/>
            <person name="Oelmueller R."/>
        </authorList>
    </citation>
    <scope>FUNCTION</scope>
</reference>
<reference key="18">
    <citation type="journal article" date="2009" name="Plant Cell">
        <title>The histidine kinases CYTOKININ-INDEPENDENT1 and ARABIDOPSIS HISTIDINE KINASE2 and 3 regulate vascular tissue development in Arabidopsis shoots.</title>
        <authorList>
            <person name="Hejatko J."/>
            <person name="Ryu H."/>
            <person name="Kim G.-T."/>
            <person name="Dobesova R."/>
            <person name="Choi S."/>
            <person name="Choi S.M."/>
            <person name="Soucek P."/>
            <person name="Horak J."/>
            <person name="Pekarova B."/>
            <person name="Palme K."/>
            <person name="Brzobohaty B."/>
            <person name="Hwang I."/>
        </authorList>
    </citation>
    <scope>FUNCTION</scope>
    <scope>DISRUPTION PHENOTYPE</scope>
</reference>
<reference key="19">
    <citation type="journal article" date="2010" name="Development">
        <title>STIMPY mediates cytokinin signaling during shoot meristem establishment in Arabidopsis seedlings.</title>
        <authorList>
            <person name="Skylar A."/>
            <person name="Hong F."/>
            <person name="Chory J."/>
            <person name="Weigel D."/>
            <person name="Wu X."/>
        </authorList>
    </citation>
    <scope>FUNCTION</scope>
    <scope>DISRUPTION PHENOTYPE</scope>
</reference>
<reference key="20">
    <citation type="journal article" date="2010" name="Gene">
        <title>Cytokinin overproduction-caused alteration of flower development is partially mediated by CUC2 and CUC3 in Arabidopsis.</title>
        <authorList>
            <person name="Li X.G."/>
            <person name="Su Y.H."/>
            <person name="Zhao X.Y."/>
            <person name="Li W."/>
            <person name="Gao X.Q."/>
            <person name="Zhang X.S."/>
        </authorList>
    </citation>
    <scope>FUNCTION</scope>
    <scope>DISRUPTION PHENOTYPE</scope>
</reference>
<reference key="21">
    <citation type="journal article" date="2010" name="J. Biol. Chem.">
        <title>A subset of cytokinin two-component signaling system plays a role in cold temperature stress response in Arabidopsis.</title>
        <authorList>
            <person name="Jeon J."/>
            <person name="Kim N.Y."/>
            <person name="Kim S."/>
            <person name="Kang N.Y."/>
            <person name="Novak O."/>
            <person name="Ku S.-J."/>
            <person name="Cho C."/>
            <person name="Lee D.J."/>
            <person name="Lee E.-J."/>
            <person name="Strnad M."/>
            <person name="Kim J."/>
        </authorList>
    </citation>
    <scope>FUNCTION</scope>
    <scope>DISRUPTION PHENOTYPE</scope>
</reference>
<reference key="22">
    <citation type="journal article" date="2011" name="Plant Physiol.">
        <title>The cytokinin receptors of Arabidopsis are located mainly to the endoplasmic reticulum.</title>
        <authorList>
            <person name="Wulfetange K."/>
            <person name="Lomin S.N."/>
            <person name="Romanov G.A."/>
            <person name="Stolz A."/>
            <person name="Heyl A."/>
            <person name="Schmuelling T."/>
        </authorList>
    </citation>
    <scope>SUBCELLULAR LOCATION</scope>
    <source>
        <strain>cv. Columbia</strain>
    </source>
</reference>
<sequence length="1176" mass="131860">MSITCELLNLTSKKAKKSSSSDKKWLKKPLFFLILCGSLVIVLVMFLRLGRSQKEETDSCNGEEKVLYRHQNVTRSEIHDLVSLFSDSDQVTSFECHKESSPGMWTNYGITCSLSVRSDKQETRGLPWNLGLGHSISSTSCMCGNLEPILQQPENLEEENHEEGLEQGLSSYLRNAWWCLILGVLVCHKIYVSHSKARGERKEKVHLQEALAPKKQQQRAQTSSRGAGRWRKNILLLGILGGVSFSVWWFWDTNEEIIMKRRETLANMCDERARVLQDQFNVSLNHVHALSILVSTFHHGKIPSAIDQRTFEEYTERTNFERPLTSGVAYALKVPHSEREKFEKEHGWAIKKMETEDQTVVQDCVPENFDPAPIQDEYAPVIFAQETVSHIVSVDMMSGEEDRENILRARASGKGVLTSPFKLLKSNHLGVVLTFAVYDTSLPPDATEEQRVEATIGYLGASYDMPSLVEKLLHQLASKQTIAVDVYDTTNTSGLIKMYGSEIGDISEQHISSLDFGDPSRNHEMHCRFKHKLPIPWTAITPSILVLVITFLVGYILYEAINRIATVEEDCQKMRELKARAEAADIAKSQFLATVSHEIRTPMNGVLGMLKMLMDTDLDAKQMDYAQTAHGSGKDLTSLINEVLDQAKIESGRLELENVPFDMRFILDNVSSLLSGKANEKGIELAVYVSSQVPDVVVGDPSRFRQIITNLVGNSIKFTQERGHIFISVHLADEVKEPLTIEDAVLKQRLALGCSESGETVSGFPAVNAWGSWKNFKTCYSTESQNSDQIKLLVTVEDTGVGIPVDAQGRIFTPFMQADSSTSRTYGGTGIGLSISKRLVELMQGEMGFVSEPGIGSTFSFTGVFGKAETNTSITKLERFDLAIQEFTGLRALVIDNRNIRAEVTRYELRRLGISADIVSSLRMACTCCISKLENLAMILIDKDAWNKEEFSVLDELFTRSKVTFTRVPKIFLLATSATLTERSEMKSTGLIDEVVIKPLRMSVLICCLQETLVNGKKRQPNRQRRNLGHLLREKQILVVDDNLVNRRVAEGALKKYGAIVTCVESGKAALAMLKPPHNFDACFMDLQMPEMDGFEATRRVRELEREINKKIASGEVSAEMFCKFSSWHVPILAMTADVIQATHEECMKCGMDGYVSKPFEEEVLYTAVARFFEPC</sequence>
<evidence type="ECO:0000250" key="1"/>
<evidence type="ECO:0000255" key="2"/>
<evidence type="ECO:0000255" key="3">
    <source>
        <dbReference type="PROSITE-ProRule" id="PRU00049"/>
    </source>
</evidence>
<evidence type="ECO:0000255" key="4">
    <source>
        <dbReference type="PROSITE-ProRule" id="PRU00107"/>
    </source>
</evidence>
<evidence type="ECO:0000255" key="5">
    <source>
        <dbReference type="PROSITE-ProRule" id="PRU00169"/>
    </source>
</evidence>
<evidence type="ECO:0000269" key="6">
    <source>
    </source>
</evidence>
<evidence type="ECO:0000269" key="7">
    <source>
    </source>
</evidence>
<evidence type="ECO:0000269" key="8">
    <source>
    </source>
</evidence>
<evidence type="ECO:0000269" key="9">
    <source>
    </source>
</evidence>
<evidence type="ECO:0000269" key="10">
    <source>
    </source>
</evidence>
<evidence type="ECO:0000269" key="11">
    <source>
    </source>
</evidence>
<evidence type="ECO:0000269" key="12">
    <source>
    </source>
</evidence>
<evidence type="ECO:0000269" key="13">
    <source>
    </source>
</evidence>
<evidence type="ECO:0000269" key="14">
    <source>
    </source>
</evidence>
<evidence type="ECO:0000269" key="15">
    <source>
    </source>
</evidence>
<evidence type="ECO:0000269" key="16">
    <source>
    </source>
</evidence>
<evidence type="ECO:0000269" key="17">
    <source>
    </source>
</evidence>
<evidence type="ECO:0000269" key="18">
    <source>
    </source>
</evidence>
<evidence type="ECO:0000269" key="19">
    <source>
    </source>
</evidence>
<evidence type="ECO:0000269" key="20">
    <source>
    </source>
</evidence>
<evidence type="ECO:0000269" key="21">
    <source>
    </source>
</evidence>
<evidence type="ECO:0000305" key="22"/>